<protein>
    <recommendedName>
        <fullName evidence="1">Arginine--tRNA ligase</fullName>
        <ecNumber evidence="1">6.1.1.19</ecNumber>
    </recommendedName>
    <alternativeName>
        <fullName evidence="1">Arginyl-tRNA synthetase</fullName>
        <shortName evidence="1">ArgRS</shortName>
    </alternativeName>
</protein>
<sequence length="553" mass="60089">MTPAALAELLRNTAVDVLASRDLDTSVIPAAVTVERPRNPEHGDYATNIAMQVAKKAGVAPRDLAGWLAEALTGQDGIDSVEVAGPGFLNLRLAADAQGQILREVLDATDAYGRGAKYQGLKVNLEFVSANPTGPVHLGGTRWAAVGDALGRTLEAQGAEVTREYYFNDAGAQIDRFVRSLIAAARGEAAPEDGYGGAYIGEIANQVLEAEPTALDLPEAERHETFRRIGVGLMFDEVKRSLHDFGVDFDVYFHEDSLHTSGAVEKSVEQLKESGHLYFADGAWWLRSTEFGDDKDRVLIKSDGTTAYIAGDVAYLRDKRNRGFDLCIYMLGADHHGYIPRLKAAAAAFDDDPDAVEVLIGQMVNLVKDGKPVRMSKRAGTVLRLEDLVDAVGVDAARYSLIRSSVDSALDIDLDLISKRSNENPVFYVQYAHARLSSLQRNAASLGIDRGSVADADLSLLTHEREGDLIRTLGEYPRVVRSAAELREPHRIARYLEDLASAYHKFYDACRVLQPGDDQATPLTIARLQLCEAARQVLANGLGLLGVSAPEQM</sequence>
<accession>A4FN47</accession>
<proteinExistence type="inferred from homology"/>
<feature type="chain" id="PRO_1000018110" description="Arginine--tRNA ligase">
    <location>
        <begin position="1"/>
        <end position="553"/>
    </location>
</feature>
<feature type="short sequence motif" description="'HIGH' region">
    <location>
        <begin position="130"/>
        <end position="140"/>
    </location>
</feature>
<keyword id="KW-0030">Aminoacyl-tRNA synthetase</keyword>
<keyword id="KW-0067">ATP-binding</keyword>
<keyword id="KW-0963">Cytoplasm</keyword>
<keyword id="KW-0436">Ligase</keyword>
<keyword id="KW-0547">Nucleotide-binding</keyword>
<keyword id="KW-0648">Protein biosynthesis</keyword>
<keyword id="KW-1185">Reference proteome</keyword>
<organism>
    <name type="scientific">Saccharopolyspora erythraea (strain ATCC 11635 / DSM 40517 / JCM 4748 / NBRC 13426 / NCIMB 8594 / NRRL 2338)</name>
    <dbReference type="NCBI Taxonomy" id="405948"/>
    <lineage>
        <taxon>Bacteria</taxon>
        <taxon>Bacillati</taxon>
        <taxon>Actinomycetota</taxon>
        <taxon>Actinomycetes</taxon>
        <taxon>Pseudonocardiales</taxon>
        <taxon>Pseudonocardiaceae</taxon>
        <taxon>Saccharopolyspora</taxon>
    </lineage>
</organism>
<comment type="catalytic activity">
    <reaction evidence="1">
        <text>tRNA(Arg) + L-arginine + ATP = L-arginyl-tRNA(Arg) + AMP + diphosphate</text>
        <dbReference type="Rhea" id="RHEA:20301"/>
        <dbReference type="Rhea" id="RHEA-COMP:9658"/>
        <dbReference type="Rhea" id="RHEA-COMP:9673"/>
        <dbReference type="ChEBI" id="CHEBI:30616"/>
        <dbReference type="ChEBI" id="CHEBI:32682"/>
        <dbReference type="ChEBI" id="CHEBI:33019"/>
        <dbReference type="ChEBI" id="CHEBI:78442"/>
        <dbReference type="ChEBI" id="CHEBI:78513"/>
        <dbReference type="ChEBI" id="CHEBI:456215"/>
        <dbReference type="EC" id="6.1.1.19"/>
    </reaction>
</comment>
<comment type="subunit">
    <text evidence="1">Monomer.</text>
</comment>
<comment type="subcellular location">
    <subcellularLocation>
        <location evidence="1">Cytoplasm</location>
    </subcellularLocation>
</comment>
<comment type="similarity">
    <text evidence="1">Belongs to the class-I aminoacyl-tRNA synthetase family.</text>
</comment>
<dbReference type="EC" id="6.1.1.19" evidence="1"/>
<dbReference type="EMBL" id="AM420293">
    <property type="protein sequence ID" value="CAM05472.1"/>
    <property type="molecule type" value="Genomic_DNA"/>
</dbReference>
<dbReference type="RefSeq" id="WP_009948452.1">
    <property type="nucleotide sequence ID" value="NC_009142.1"/>
</dbReference>
<dbReference type="SMR" id="A4FN47"/>
<dbReference type="STRING" id="405948.SACE_6300"/>
<dbReference type="KEGG" id="sen:SACE_6300"/>
<dbReference type="eggNOG" id="COG0018">
    <property type="taxonomic scope" value="Bacteria"/>
</dbReference>
<dbReference type="HOGENOM" id="CLU_006406_0_1_11"/>
<dbReference type="OrthoDB" id="9803211at2"/>
<dbReference type="Proteomes" id="UP000006728">
    <property type="component" value="Chromosome"/>
</dbReference>
<dbReference type="GO" id="GO:0005737">
    <property type="term" value="C:cytoplasm"/>
    <property type="evidence" value="ECO:0007669"/>
    <property type="project" value="UniProtKB-SubCell"/>
</dbReference>
<dbReference type="GO" id="GO:0004814">
    <property type="term" value="F:arginine-tRNA ligase activity"/>
    <property type="evidence" value="ECO:0007669"/>
    <property type="project" value="UniProtKB-UniRule"/>
</dbReference>
<dbReference type="GO" id="GO:0005524">
    <property type="term" value="F:ATP binding"/>
    <property type="evidence" value="ECO:0007669"/>
    <property type="project" value="UniProtKB-UniRule"/>
</dbReference>
<dbReference type="GO" id="GO:0006420">
    <property type="term" value="P:arginyl-tRNA aminoacylation"/>
    <property type="evidence" value="ECO:0007669"/>
    <property type="project" value="UniProtKB-UniRule"/>
</dbReference>
<dbReference type="CDD" id="cd07956">
    <property type="entry name" value="Anticodon_Ia_Arg"/>
    <property type="match status" value="1"/>
</dbReference>
<dbReference type="CDD" id="cd00671">
    <property type="entry name" value="ArgRS_core"/>
    <property type="match status" value="1"/>
</dbReference>
<dbReference type="FunFam" id="1.10.730.10:FF:000008">
    <property type="entry name" value="Arginine--tRNA ligase"/>
    <property type="match status" value="1"/>
</dbReference>
<dbReference type="FunFam" id="3.40.50.620:FF:000062">
    <property type="entry name" value="Arginine--tRNA ligase"/>
    <property type="match status" value="1"/>
</dbReference>
<dbReference type="Gene3D" id="3.30.1360.70">
    <property type="entry name" value="Arginyl tRNA synthetase N-terminal domain"/>
    <property type="match status" value="1"/>
</dbReference>
<dbReference type="Gene3D" id="3.40.50.620">
    <property type="entry name" value="HUPs"/>
    <property type="match status" value="1"/>
</dbReference>
<dbReference type="Gene3D" id="1.10.730.10">
    <property type="entry name" value="Isoleucyl-tRNA Synthetase, Domain 1"/>
    <property type="match status" value="1"/>
</dbReference>
<dbReference type="HAMAP" id="MF_00123">
    <property type="entry name" value="Arg_tRNA_synth"/>
    <property type="match status" value="1"/>
</dbReference>
<dbReference type="InterPro" id="IPR001412">
    <property type="entry name" value="aa-tRNA-synth_I_CS"/>
</dbReference>
<dbReference type="InterPro" id="IPR001278">
    <property type="entry name" value="Arg-tRNA-ligase"/>
</dbReference>
<dbReference type="InterPro" id="IPR005148">
    <property type="entry name" value="Arg-tRNA-synth_N"/>
</dbReference>
<dbReference type="InterPro" id="IPR036695">
    <property type="entry name" value="Arg-tRNA-synth_N_sf"/>
</dbReference>
<dbReference type="InterPro" id="IPR035684">
    <property type="entry name" value="ArgRS_core"/>
</dbReference>
<dbReference type="InterPro" id="IPR008909">
    <property type="entry name" value="DALR_anticod-bd"/>
</dbReference>
<dbReference type="InterPro" id="IPR014729">
    <property type="entry name" value="Rossmann-like_a/b/a_fold"/>
</dbReference>
<dbReference type="InterPro" id="IPR009080">
    <property type="entry name" value="tRNAsynth_Ia_anticodon-bd"/>
</dbReference>
<dbReference type="NCBIfam" id="TIGR00456">
    <property type="entry name" value="argS"/>
    <property type="match status" value="1"/>
</dbReference>
<dbReference type="PANTHER" id="PTHR11956:SF5">
    <property type="entry name" value="ARGININE--TRNA LIGASE, CYTOPLASMIC"/>
    <property type="match status" value="1"/>
</dbReference>
<dbReference type="PANTHER" id="PTHR11956">
    <property type="entry name" value="ARGINYL-TRNA SYNTHETASE"/>
    <property type="match status" value="1"/>
</dbReference>
<dbReference type="Pfam" id="PF03485">
    <property type="entry name" value="Arg_tRNA_synt_N"/>
    <property type="match status" value="1"/>
</dbReference>
<dbReference type="Pfam" id="PF05746">
    <property type="entry name" value="DALR_1"/>
    <property type="match status" value="1"/>
</dbReference>
<dbReference type="Pfam" id="PF00750">
    <property type="entry name" value="tRNA-synt_1d"/>
    <property type="match status" value="2"/>
</dbReference>
<dbReference type="PRINTS" id="PR01038">
    <property type="entry name" value="TRNASYNTHARG"/>
</dbReference>
<dbReference type="SMART" id="SM01016">
    <property type="entry name" value="Arg_tRNA_synt_N"/>
    <property type="match status" value="1"/>
</dbReference>
<dbReference type="SMART" id="SM00836">
    <property type="entry name" value="DALR_1"/>
    <property type="match status" value="1"/>
</dbReference>
<dbReference type="SUPFAM" id="SSF47323">
    <property type="entry name" value="Anticodon-binding domain of a subclass of class I aminoacyl-tRNA synthetases"/>
    <property type="match status" value="1"/>
</dbReference>
<dbReference type="SUPFAM" id="SSF55190">
    <property type="entry name" value="Arginyl-tRNA synthetase (ArgRS), N-terminal 'additional' domain"/>
    <property type="match status" value="1"/>
</dbReference>
<dbReference type="SUPFAM" id="SSF52374">
    <property type="entry name" value="Nucleotidylyl transferase"/>
    <property type="match status" value="1"/>
</dbReference>
<dbReference type="PROSITE" id="PS00178">
    <property type="entry name" value="AA_TRNA_LIGASE_I"/>
    <property type="match status" value="1"/>
</dbReference>
<evidence type="ECO:0000255" key="1">
    <source>
        <dbReference type="HAMAP-Rule" id="MF_00123"/>
    </source>
</evidence>
<reference key="1">
    <citation type="journal article" date="2007" name="Nat. Biotechnol.">
        <title>Complete genome sequence of the erythromycin-producing bacterium Saccharopolyspora erythraea NRRL23338.</title>
        <authorList>
            <person name="Oliynyk M."/>
            <person name="Samborskyy M."/>
            <person name="Lester J.B."/>
            <person name="Mironenko T."/>
            <person name="Scott N."/>
            <person name="Dickens S."/>
            <person name="Haydock S.F."/>
            <person name="Leadlay P.F."/>
        </authorList>
    </citation>
    <scope>NUCLEOTIDE SEQUENCE [LARGE SCALE GENOMIC DNA]</scope>
    <source>
        <strain>ATCC 11635 / DSM 40517 / JCM 4748 / NBRC 13426 / NCIMB 8594 / NRRL 2338</strain>
    </source>
</reference>
<gene>
    <name evidence="1" type="primary">argS</name>
    <name type="ordered locus">SACE_6300</name>
</gene>
<name>SYR_SACEN</name>